<organism>
    <name type="scientific">Rhizorhabdus wittichii (strain DSM 6014 / CCUG 31198 / JCM 15750 / NBRC 105917 / EY 4224 / RW1)</name>
    <name type="common">Sphingomonas wittichii</name>
    <dbReference type="NCBI Taxonomy" id="392499"/>
    <lineage>
        <taxon>Bacteria</taxon>
        <taxon>Pseudomonadati</taxon>
        <taxon>Pseudomonadota</taxon>
        <taxon>Alphaproteobacteria</taxon>
        <taxon>Sphingomonadales</taxon>
        <taxon>Sphingomonadaceae</taxon>
        <taxon>Rhizorhabdus</taxon>
    </lineage>
</organism>
<gene>
    <name evidence="1" type="primary">rplV</name>
    <name type="ordered locus">Swit_1348</name>
</gene>
<reference key="1">
    <citation type="journal article" date="2010" name="J. Bacteriol.">
        <title>Genome sequence of the dioxin-mineralizing bacterium Sphingomonas wittichii RW1.</title>
        <authorList>
            <person name="Miller T.R."/>
            <person name="Delcher A.L."/>
            <person name="Salzberg S.L."/>
            <person name="Saunders E."/>
            <person name="Detter J.C."/>
            <person name="Halden R.U."/>
        </authorList>
    </citation>
    <scope>NUCLEOTIDE SEQUENCE [LARGE SCALE GENOMIC DNA]</scope>
    <source>
        <strain>DSM 6014 / CCUG 31198 / JCM 15750 / NBRC 105917 / EY 4224 / RW1</strain>
    </source>
</reference>
<accession>A5V5Z7</accession>
<name>RL22_RHIWR</name>
<dbReference type="EMBL" id="CP000699">
    <property type="protein sequence ID" value="ABQ67713.1"/>
    <property type="molecule type" value="Genomic_DNA"/>
</dbReference>
<dbReference type="SMR" id="A5V5Z7"/>
<dbReference type="STRING" id="392499.Swit_1348"/>
<dbReference type="PaxDb" id="392499-Swit_1348"/>
<dbReference type="KEGG" id="swi:Swit_1348"/>
<dbReference type="eggNOG" id="COG0091">
    <property type="taxonomic scope" value="Bacteria"/>
</dbReference>
<dbReference type="HOGENOM" id="CLU_083987_3_0_5"/>
<dbReference type="OrthoDB" id="9805969at2"/>
<dbReference type="Proteomes" id="UP000001989">
    <property type="component" value="Chromosome"/>
</dbReference>
<dbReference type="GO" id="GO:0022625">
    <property type="term" value="C:cytosolic large ribosomal subunit"/>
    <property type="evidence" value="ECO:0007669"/>
    <property type="project" value="TreeGrafter"/>
</dbReference>
<dbReference type="GO" id="GO:0019843">
    <property type="term" value="F:rRNA binding"/>
    <property type="evidence" value="ECO:0007669"/>
    <property type="project" value="UniProtKB-UniRule"/>
</dbReference>
<dbReference type="GO" id="GO:0003735">
    <property type="term" value="F:structural constituent of ribosome"/>
    <property type="evidence" value="ECO:0007669"/>
    <property type="project" value="InterPro"/>
</dbReference>
<dbReference type="GO" id="GO:0006412">
    <property type="term" value="P:translation"/>
    <property type="evidence" value="ECO:0007669"/>
    <property type="project" value="UniProtKB-UniRule"/>
</dbReference>
<dbReference type="CDD" id="cd00336">
    <property type="entry name" value="Ribosomal_L22"/>
    <property type="match status" value="1"/>
</dbReference>
<dbReference type="Gene3D" id="3.90.470.10">
    <property type="entry name" value="Ribosomal protein L22/L17"/>
    <property type="match status" value="1"/>
</dbReference>
<dbReference type="HAMAP" id="MF_01331_B">
    <property type="entry name" value="Ribosomal_uL22_B"/>
    <property type="match status" value="1"/>
</dbReference>
<dbReference type="InterPro" id="IPR001063">
    <property type="entry name" value="Ribosomal_uL22"/>
</dbReference>
<dbReference type="InterPro" id="IPR005727">
    <property type="entry name" value="Ribosomal_uL22_bac/chlpt-type"/>
</dbReference>
<dbReference type="InterPro" id="IPR047867">
    <property type="entry name" value="Ribosomal_uL22_bac/org-type"/>
</dbReference>
<dbReference type="InterPro" id="IPR036394">
    <property type="entry name" value="Ribosomal_uL22_sf"/>
</dbReference>
<dbReference type="NCBIfam" id="TIGR01044">
    <property type="entry name" value="rplV_bact"/>
    <property type="match status" value="1"/>
</dbReference>
<dbReference type="PANTHER" id="PTHR13501">
    <property type="entry name" value="CHLOROPLAST 50S RIBOSOMAL PROTEIN L22-RELATED"/>
    <property type="match status" value="1"/>
</dbReference>
<dbReference type="PANTHER" id="PTHR13501:SF8">
    <property type="entry name" value="LARGE RIBOSOMAL SUBUNIT PROTEIN UL22M"/>
    <property type="match status" value="1"/>
</dbReference>
<dbReference type="Pfam" id="PF00237">
    <property type="entry name" value="Ribosomal_L22"/>
    <property type="match status" value="1"/>
</dbReference>
<dbReference type="SUPFAM" id="SSF54843">
    <property type="entry name" value="Ribosomal protein L22"/>
    <property type="match status" value="1"/>
</dbReference>
<keyword id="KW-1185">Reference proteome</keyword>
<keyword id="KW-0687">Ribonucleoprotein</keyword>
<keyword id="KW-0689">Ribosomal protein</keyword>
<keyword id="KW-0694">RNA-binding</keyword>
<keyword id="KW-0699">rRNA-binding</keyword>
<sequence>MSKPAAPRRVGEKEALAVATTVRGSPYKLNLVAGLIRGKKAGDALNILTFSKKAMAVDVRKVLASAIANAENNHNLDVDALVVKEASVGKSIVMKRFATRGRGKSTRIIKPFARLRVVVREQQEEAE</sequence>
<evidence type="ECO:0000255" key="1">
    <source>
        <dbReference type="HAMAP-Rule" id="MF_01331"/>
    </source>
</evidence>
<evidence type="ECO:0000305" key="2"/>
<protein>
    <recommendedName>
        <fullName evidence="1">Large ribosomal subunit protein uL22</fullName>
    </recommendedName>
    <alternativeName>
        <fullName evidence="2">50S ribosomal protein L22</fullName>
    </alternativeName>
</protein>
<proteinExistence type="inferred from homology"/>
<feature type="chain" id="PRO_0000354519" description="Large ribosomal subunit protein uL22">
    <location>
        <begin position="1"/>
        <end position="127"/>
    </location>
</feature>
<comment type="function">
    <text evidence="1">This protein binds specifically to 23S rRNA; its binding is stimulated by other ribosomal proteins, e.g. L4, L17, and L20. It is important during the early stages of 50S assembly. It makes multiple contacts with different domains of the 23S rRNA in the assembled 50S subunit and ribosome (By similarity).</text>
</comment>
<comment type="function">
    <text evidence="1">The globular domain of the protein is located near the polypeptide exit tunnel on the outside of the subunit, while an extended beta-hairpin is found that lines the wall of the exit tunnel in the center of the 70S ribosome.</text>
</comment>
<comment type="subunit">
    <text evidence="1">Part of the 50S ribosomal subunit.</text>
</comment>
<comment type="similarity">
    <text evidence="1">Belongs to the universal ribosomal protein uL22 family.</text>
</comment>